<organism>
    <name type="scientific">Sendai virus (strain Z)</name>
    <name type="common">SeV</name>
    <name type="synonym">Sendai virus (strain HVJ)</name>
    <dbReference type="NCBI Taxonomy" id="11198"/>
    <lineage>
        <taxon>Viruses</taxon>
        <taxon>Riboviria</taxon>
        <taxon>Orthornavirae</taxon>
        <taxon>Negarnaviricota</taxon>
        <taxon>Haploviricotina</taxon>
        <taxon>Monjiviricetes</taxon>
        <taxon>Mononegavirales</taxon>
        <taxon>Paramyxoviridae</taxon>
        <taxon>Feraresvirinae</taxon>
        <taxon>Respirovirus</taxon>
        <taxon>Respirovirus muris</taxon>
    </lineage>
</organism>
<keyword id="KW-1035">Host cytoplasm</keyword>
<keyword id="KW-0945">Host-virus interaction</keyword>
<keyword id="KW-1090">Inhibition of host innate immune response by virus</keyword>
<keyword id="KW-1092">Inhibition of host IRF3 by virus</keyword>
<keyword id="KW-1089">Inhibition of host MDA5 by virus</keyword>
<keyword id="KW-1113">Inhibition of host RLR pathway by virus</keyword>
<keyword id="KW-0922">Interferon antiviral system evasion</keyword>
<keyword id="KW-0479">Metal-binding</keyword>
<keyword id="KW-0597">Phosphoprotein</keyword>
<keyword id="KW-0691">RNA editing</keyword>
<keyword id="KW-0899">Viral immunoevasion</keyword>
<keyword id="KW-0862">Zinc</keyword>
<gene>
    <name type="primary">P/V/C</name>
</gene>
<accession>P69282</accession>
<dbReference type="EMBL" id="X00087">
    <property type="status" value="NOT_ANNOTATED_CDS"/>
    <property type="molecule type" value="Genomic_RNA"/>
</dbReference>
<dbReference type="SMR" id="P69282"/>
<dbReference type="Proteomes" id="UP000006560">
    <property type="component" value="Genome"/>
</dbReference>
<dbReference type="GO" id="GO:0044164">
    <property type="term" value="C:host cell cytosol"/>
    <property type="evidence" value="ECO:0000314"/>
    <property type="project" value="CACAO"/>
</dbReference>
<dbReference type="GO" id="GO:0046872">
    <property type="term" value="F:metal ion binding"/>
    <property type="evidence" value="ECO:0007669"/>
    <property type="project" value="UniProtKB-KW"/>
</dbReference>
<dbReference type="GO" id="GO:1900226">
    <property type="term" value="P:negative regulation of NLRP3 inflammasome complex assembly"/>
    <property type="evidence" value="ECO:0000315"/>
    <property type="project" value="CACAO"/>
</dbReference>
<dbReference type="GO" id="GO:0039548">
    <property type="term" value="P:symbiont-mediated suppression of host cytoplasmic pattern recognition receptor signaling pathway via inhibition of IRF3 activity"/>
    <property type="evidence" value="ECO:0000314"/>
    <property type="project" value="CACAO"/>
</dbReference>
<dbReference type="GO" id="GO:0039554">
    <property type="term" value="P:symbiont-mediated suppression of host cytoplasmic pattern recognition receptor signaling pathway via inhibition of MDA-5 activity"/>
    <property type="evidence" value="ECO:0007669"/>
    <property type="project" value="UniProtKB-KW"/>
</dbReference>
<dbReference type="GO" id="GO:0039540">
    <property type="term" value="P:symbiont-mediated suppression of host cytoplasmic pattern recognition receptor signaling pathway via inhibition of RIG-I activity"/>
    <property type="evidence" value="ECO:0000314"/>
    <property type="project" value="UniProtKB"/>
</dbReference>
<dbReference type="GO" id="GO:0052170">
    <property type="term" value="P:symbiont-mediated suppression of host innate immune response"/>
    <property type="evidence" value="ECO:0000315"/>
    <property type="project" value="CACAO"/>
</dbReference>
<dbReference type="FunFam" id="4.10.80.340:FF:000001">
    <property type="entry name" value="Protein V"/>
    <property type="match status" value="1"/>
</dbReference>
<dbReference type="Gene3D" id="4.10.80.340">
    <property type="match status" value="1"/>
</dbReference>
<dbReference type="InterPro" id="IPR024279">
    <property type="entry name" value="Paramyx_V_Zn-bd"/>
</dbReference>
<dbReference type="Pfam" id="PF13008">
    <property type="entry name" value="zf-Paramyx-P"/>
    <property type="match status" value="1"/>
</dbReference>
<organismHost>
    <name type="scientific">Cavia cutleri</name>
    <name type="common">Guinea pig</name>
    <dbReference type="NCBI Taxonomy" id="10144"/>
</organismHost>
<organismHost>
    <name type="scientific">Cricetidae sp.</name>
    <name type="common">Hamster</name>
    <dbReference type="NCBI Taxonomy" id="36483"/>
</organismHost>
<organismHost>
    <name type="scientific">Mus musculus</name>
    <name type="common">Mouse</name>
    <dbReference type="NCBI Taxonomy" id="10090"/>
</organismHost>
<organismHost>
    <name type="scientific">Rattus norvegicus</name>
    <name type="common">Rat</name>
    <dbReference type="NCBI Taxonomy" id="10116"/>
</organismHost>
<evidence type="ECO:0000250" key="1"/>
<evidence type="ECO:0000250" key="2">
    <source>
        <dbReference type="UniProtKB" id="P69280"/>
    </source>
</evidence>
<evidence type="ECO:0000256" key="3">
    <source>
        <dbReference type="SAM" id="MobiDB-lite"/>
    </source>
</evidence>
<evidence type="ECO:0000269" key="4">
    <source>
    </source>
</evidence>
<evidence type="ECO:0000269" key="5">
    <source>
    </source>
</evidence>
<evidence type="ECO:0000269" key="6">
    <source>
    </source>
</evidence>
<evidence type="ECO:0000269" key="7">
    <source>
    </source>
</evidence>
<evidence type="ECO:0000269" key="8">
    <source>
    </source>
</evidence>
<evidence type="ECO:0000269" key="9">
    <source>
    </source>
</evidence>
<evidence type="ECO:0000305" key="10"/>
<comment type="function">
    <text evidence="2 6 8 9">Plays an essential role in the inhibition of host immune response. Prevents the establishment of cellular antiviral state by blocking interferon-alpha/beta (IFN-alpha/beta) production and signaling pathway. Interacts with host IFIH1/MDA5 and DHX58/LGP2 to inhibit the transduction pathway involved in the activation of IFN-beta promoter, thus protecting the virus against cell antiviral state (By similarity). Also interacts with and inhibits host IRF3 (PubMed:15231393, PubMed:22532687). Blocks the type I interferon signaling pathway by disrupting the RIG-I signaling pathway (PubMed:29321315).</text>
</comment>
<comment type="subunit">
    <text evidence="8 9">Interacts with host IFIH1/MDA5 and DHX58/LGP2. Interacts with host IRF3 (PubMed:22532687). Interacts with host RIGI regulatory protein (via CARDs domain) and host TRIM25 (via SPRY domain); these interactions prevent TRIM25-mediated ubiquitination of RIG-I and disrupts downstream RIG-I signaling (PubMed:29321315).</text>
</comment>
<comment type="subcellular location">
    <subcellularLocation>
        <location evidence="8">Host cytoplasm</location>
    </subcellularLocation>
</comment>
<comment type="domain">
    <text evidence="1">The C-terminal zinc-binding domain is involved in binding to IFIH1/MDA5 (By similarity). This domain is also involved in viral pathogenesis.</text>
</comment>
<comment type="RNA editing">
    <location>
        <position position="318" evidence="7"/>
    </location>
    <text>Partially edited. RNA editing at this position consists of an insertion of one or two guanine nucleotides. The sequence displayed here is the V protein, derived from the +1G edited RNA. The unedited RNA gives rise to the P protein (AC P04860), the +2G edited RNA gives rise to the W protein (AC P69283).</text>
</comment>
<comment type="miscellaneous">
    <text>The P/V/C gene has two overlapping open reading frames. One encodes the P/V/W proteins and the other the C/Y proteins.</text>
</comment>
<comment type="similarity">
    <text evidence="10">Belongs to the paramyxoviruses V protein family.</text>
</comment>
<reference key="1">
    <citation type="journal article" date="1983" name="Nucleic Acids Res.">
        <title>Sequence of 3,687 nucleotides from the 3' end of Sendai virus genome RNA and the predicted amino acid sequences of viral NP, P and C proteins.</title>
        <authorList>
            <person name="Shioda T."/>
            <person name="Hidaka Y."/>
            <person name="Kanda T."/>
            <person name="Shibuta H."/>
            <person name="Nomoto A."/>
            <person name="Iwasaki K."/>
        </authorList>
    </citation>
    <scope>NUCLEOTIDE SEQUENCE [GENOMIC RNA]</scope>
</reference>
<reference key="2">
    <citation type="submission" date="1985-02" db="EMBL/GenBank/DDBJ databases">
        <authorList>
            <person name="Shibuta H."/>
        </authorList>
    </citation>
    <scope>NUCLEOTIDE SEQUENCE [GENOMIC RNA]</scope>
</reference>
<reference key="3">
    <citation type="journal article" date="1991" name="EMBO J.">
        <title>The Sendai virus P gene expresses both an essential protein and an inhibitor of RNA synthesis by shuffling modules via mRNA editing.</title>
        <authorList>
            <person name="Curran J."/>
            <person name="Boeck R."/>
            <person name="Kolakofsky D."/>
        </authorList>
    </citation>
    <scope>RNA EDITING</scope>
</reference>
<reference key="4">
    <citation type="journal article" date="2000" name="J. Virol.">
        <title>Involvement of the zinc-binding capacity of Sendai virus V protein in viral pathogenesis.</title>
        <authorList>
            <person name="Huang C."/>
            <person name="Kiyotani K."/>
            <person name="Fujii Y."/>
            <person name="Fukuhara N."/>
            <person name="Kato A."/>
            <person name="Nagai Y."/>
            <person name="Yoshida T."/>
            <person name="Sakaguchi T."/>
        </authorList>
    </citation>
    <scope>ZINC-BINDING DOMAIN</scope>
    <scope>MUTAGENESIS OF CYS-337; CYS-341; CYS-353; CYS-355; CYS-358 AND CYS-365</scope>
</reference>
<reference key="5">
    <citation type="journal article" date="2002" name="Virology">
        <title>Mutational analysis of the Sendai virus V protein: importance of the conserved residues for Zn binding, virus pathogenesis, and efficient RNA editing.</title>
        <authorList>
            <person name="Fukuhara N."/>
            <person name="Huang C."/>
            <person name="Kiyotani K."/>
            <person name="Yoshida T."/>
            <person name="Sakaguchi T."/>
        </authorList>
    </citation>
    <scope>MUTAGENESIS OF HIS-318; ARG-319; ARG-320; GLU-321; TRP-336; PRO-339; 337-CYS--CYS-341; 353-CYS--CYS-358 AND 362-CYS--CYS-365</scope>
</reference>
<reference key="6">
    <citation type="journal article" date="2004" name="Virology">
        <title>C and V proteins of Sendai virus target signaling pathways leading to IRF-3 activation for the negative regulation of interferon-beta production.</title>
        <authorList>
            <person name="Komatsu T."/>
            <person name="Takeuchi K."/>
            <person name="Yokoo J."/>
            <person name="Gotoh B."/>
        </authorList>
    </citation>
    <scope>FUNCTION</scope>
</reference>
<reference key="7">
    <citation type="journal article" date="2012" name="J. Virol.">
        <title>Inhibition of interferon regulatory factor 3 activation by paramyxovirus V protein.</title>
        <authorList>
            <person name="Irie T."/>
            <person name="Kiyotani K."/>
            <person name="Igarashi T."/>
            <person name="Yoshida A."/>
            <person name="Sakaguchi T."/>
        </authorList>
    </citation>
    <scope>SUBCELLULAR LOCATION</scope>
    <scope>FUNCTION</scope>
    <scope>INTERACTION WITH HOST IRF3; RIGI AND IFIH1</scope>
</reference>
<reference key="8">
    <citation type="journal article" date="2018" name="J. Virol.">
        <title>Paramyxovirus V Proteins Interact with the RIG-I/TRIM25 Regulatory Complex and Inhibit RIG-I Signaling.</title>
        <authorList>
            <person name="Sanchez-Aparicio M.T."/>
            <person name="Feinman L.J."/>
            <person name="Garcia-Sastre A."/>
            <person name="Shaw M.L."/>
        </authorList>
    </citation>
    <scope>FUNCTION</scope>
    <scope>INTERACTION WITH HOST TRIM25</scope>
    <scope>INTERACTION WITH HOST RIGI</scope>
    <source>
        <strain>Cantell</strain>
    </source>
</reference>
<feature type="chain" id="PRO_0000142829" description="Protein V">
    <location>
        <begin position="1"/>
        <end position="384"/>
    </location>
</feature>
<feature type="region of interest" description="Disordered" evidence="3">
    <location>
        <begin position="1"/>
        <end position="23"/>
    </location>
</feature>
<feature type="region of interest" description="Disordered" evidence="3">
    <location>
        <begin position="38"/>
        <end position="317"/>
    </location>
</feature>
<feature type="compositionally biased region" description="Basic and acidic residues" evidence="3">
    <location>
        <begin position="7"/>
        <end position="20"/>
    </location>
</feature>
<feature type="compositionally biased region" description="Polar residues" evidence="3">
    <location>
        <begin position="50"/>
        <end position="59"/>
    </location>
</feature>
<feature type="compositionally biased region" description="Basic and acidic residues" evidence="3">
    <location>
        <begin position="83"/>
        <end position="101"/>
    </location>
</feature>
<feature type="compositionally biased region" description="Basic and acidic residues" evidence="3">
    <location>
        <begin position="150"/>
        <end position="168"/>
    </location>
</feature>
<feature type="compositionally biased region" description="Polar residues" evidence="3">
    <location>
        <begin position="191"/>
        <end position="206"/>
    </location>
</feature>
<feature type="binding site" evidence="1">
    <location>
        <position position="318"/>
    </location>
    <ligand>
        <name>Zn(2+)</name>
        <dbReference type="ChEBI" id="CHEBI:29105"/>
        <label>1</label>
    </ligand>
</feature>
<feature type="binding site" evidence="1">
    <location>
        <position position="337"/>
    </location>
    <ligand>
        <name>Zn(2+)</name>
        <dbReference type="ChEBI" id="CHEBI:29105"/>
        <label>1</label>
    </ligand>
</feature>
<feature type="binding site" evidence="1">
    <location>
        <position position="341"/>
    </location>
    <ligand>
        <name>Zn(2+)</name>
        <dbReference type="ChEBI" id="CHEBI:29105"/>
        <label>2</label>
    </ligand>
</feature>
<feature type="binding site" evidence="1">
    <location>
        <position position="353"/>
    </location>
    <ligand>
        <name>Zn(2+)</name>
        <dbReference type="ChEBI" id="CHEBI:29105"/>
        <label>2</label>
    </ligand>
</feature>
<feature type="binding site" evidence="1">
    <location>
        <position position="355"/>
    </location>
    <ligand>
        <name>Zn(2+)</name>
        <dbReference type="ChEBI" id="CHEBI:29105"/>
        <label>2</label>
    </ligand>
</feature>
<feature type="binding site" evidence="1">
    <location>
        <position position="358"/>
    </location>
    <ligand>
        <name>Zn(2+)</name>
        <dbReference type="ChEBI" id="CHEBI:29105"/>
        <label>2</label>
    </ligand>
</feature>
<feature type="binding site" evidence="1">
    <location>
        <position position="362"/>
    </location>
    <ligand>
        <name>Zn(2+)</name>
        <dbReference type="ChEBI" id="CHEBI:29105"/>
        <label>1</label>
    </ligand>
</feature>
<feature type="binding site" evidence="1">
    <location>
        <position position="365"/>
    </location>
    <ligand>
        <name>Zn(2+)</name>
        <dbReference type="ChEBI" id="CHEBI:29105"/>
        <label>1</label>
    </ligand>
</feature>
<feature type="modified residue" description="Phosphoserine; by host" evidence="1">
    <location>
        <position position="68"/>
    </location>
</feature>
<feature type="modified residue" description="Phosphoserine; by host" evidence="1">
    <location>
        <position position="125"/>
    </location>
</feature>
<feature type="modified residue" description="Phosphoserine; by host" evidence="1">
    <location>
        <position position="192"/>
    </location>
</feature>
<feature type="modified residue" description="Phosphoserine; by host" evidence="1">
    <location>
        <position position="249"/>
    </location>
</feature>
<feature type="modified residue" description="Phosphoserine; by host" evidence="1">
    <location>
        <position position="257"/>
    </location>
</feature>
<feature type="modified residue" description="Phosphoserine; by host" evidence="1">
    <location>
        <position position="260"/>
    </location>
</feature>
<feature type="mutagenesis site" description="Attenuates viral pathogenicity in mice." evidence="5">
    <original>H</original>
    <variation>N</variation>
    <location>
        <position position="318"/>
    </location>
</feature>
<feature type="mutagenesis site" description="80% decrease of in vitro zinc binding. Attenuates viral pathogenicity in mice." evidence="5">
    <original>R</original>
    <variation>W</variation>
    <location>
        <position position="319"/>
    </location>
</feature>
<feature type="mutagenesis site" description="Attenuates viral pathogenicity in mice." evidence="5">
    <original>R</original>
    <variation>G</variation>
    <location>
        <position position="320"/>
    </location>
</feature>
<feature type="mutagenesis site" description="Attenuates viral pathogenicity in mice." evidence="5">
    <original>E</original>
    <variation>K</variation>
    <location>
        <position position="321"/>
    </location>
</feature>
<feature type="mutagenesis site" description="Attenuates viral pathogenicity in mice." evidence="5">
    <original>W</original>
    <variation>G</variation>
    <location>
        <position position="336"/>
    </location>
</feature>
<feature type="mutagenesis site" description="60% decrease of in vitro zinc binding, attenuates viral pathogenicity in mice." evidence="5">
    <original>CNPVC</original>
    <variation>SNPVS</variation>
    <location>
        <begin position="337"/>
        <end position="341"/>
    </location>
</feature>
<feature type="mutagenesis site" description="50% decrease of in vitro zinc-binding." evidence="4">
    <original>C</original>
    <variation>S</variation>
    <location>
        <position position="337"/>
    </location>
</feature>
<feature type="mutagenesis site" description="Decreases viral pathogenicity in mice." evidence="5">
    <original>P</original>
    <variation>T</variation>
    <location>
        <position position="339"/>
    </location>
</feature>
<feature type="mutagenesis site" description="32% decrease of in vitro zinc-binding, attenuates viral pathogenicity in mice." evidence="4">
    <original>C</original>
    <variation>S</variation>
    <location>
        <position position="341"/>
    </location>
</feature>
<feature type="mutagenesis site" description="Attenuates viral pathogenicity in mice." evidence="5">
    <original>CVCKTC</original>
    <variation>RVRKTS</variation>
    <location>
        <begin position="353"/>
        <end position="358"/>
    </location>
</feature>
<feature type="mutagenesis site" description="60% decrease of in vitro zinc-binding." evidence="4">
    <original>C</original>
    <variation>R</variation>
    <location>
        <position position="353"/>
    </location>
</feature>
<feature type="mutagenesis site" description="60% decrease of in vitro zinc-binding." evidence="4">
    <original>C</original>
    <variation>R</variation>
    <location>
        <position position="355"/>
    </location>
</feature>
<feature type="mutagenesis site" description="55% decrease of in vitro zinc-binding." evidence="4">
    <original>C</original>
    <variation>S</variation>
    <location>
        <position position="358"/>
    </location>
</feature>
<feature type="mutagenesis site" description="60% decrease of in vitro zinc-binding. Attenuates viral pathogenicity in mice." evidence="5">
    <original>CKLC</original>
    <variation>SKLR</variation>
    <location>
        <begin position="362"/>
        <end position="365"/>
    </location>
</feature>
<feature type="mutagenesis site" description="78% decrease of in vitro zinc-binding. Attenuates viral pathogenicity in mice." evidence="4">
    <original>C</original>
    <variation>R</variation>
    <location>
        <position position="365"/>
    </location>
</feature>
<protein>
    <recommendedName>
        <fullName>Protein V</fullName>
    </recommendedName>
</protein>
<sequence length="384" mass="41636">MDQDAFILKEDSEVEREAPGGRESLSDVIGFLDAVLSSEPTDIGGDRSWLHNTINTPQGPGSAHRAKSEGEGEVSTPSTQDNRSGEESRVSGRTSKPEAEAHAGNLDKQNIHRAFGGRTGTNSVSQDLGDGGDSGILENPPNERGYPRSGIEDENREMAAHPDKRGEDQAEGLPEEVRGSTSLPDEGEGGASNNGRSMEPGSSHSARVTGVLVIPSPELEEAVLRRNKRRPTNSGSKPLTPATVPGTRSPPLNRYNSTGSPPGKPPSTQDEHINSGDTPAVRVKDRKPPIGTRSVSDCPANGRSIHPGLETDSTKKGHRREHIIYERDGYIVDESWCNPVCSRIRIIPRRELCVCKTCPKVCKLCRDDIQCMRPDPFCREIFRS</sequence>
<proteinExistence type="evidence at protein level"/>
<name>V_SENDZ</name>